<feature type="chain" id="PRO_0000460031" description="Spindle pole body protein CSA6">
    <location>
        <begin position="1"/>
        <end position="538"/>
    </location>
</feature>
<feature type="region of interest" description="Disordered" evidence="2">
    <location>
        <begin position="1"/>
        <end position="31"/>
    </location>
</feature>
<feature type="region of interest" description="Disordered" evidence="2">
    <location>
        <begin position="57"/>
        <end position="129"/>
    </location>
</feature>
<feature type="region of interest" description="Disordered" evidence="2">
    <location>
        <begin position="304"/>
        <end position="338"/>
    </location>
</feature>
<feature type="region of interest" description="Disordered" evidence="2">
    <location>
        <begin position="355"/>
        <end position="458"/>
    </location>
</feature>
<feature type="coiled-coil region" evidence="1">
    <location>
        <begin position="144"/>
        <end position="237"/>
    </location>
</feature>
<feature type="compositionally biased region" description="Basic and acidic residues" evidence="2">
    <location>
        <begin position="18"/>
        <end position="30"/>
    </location>
</feature>
<feature type="compositionally biased region" description="Basic and acidic residues" evidence="2">
    <location>
        <begin position="57"/>
        <end position="68"/>
    </location>
</feature>
<feature type="compositionally biased region" description="Polar residues" evidence="2">
    <location>
        <begin position="86"/>
        <end position="96"/>
    </location>
</feature>
<feature type="compositionally biased region" description="Polar residues" evidence="2">
    <location>
        <begin position="104"/>
        <end position="122"/>
    </location>
</feature>
<feature type="compositionally biased region" description="Basic and acidic residues" evidence="2">
    <location>
        <begin position="304"/>
        <end position="323"/>
    </location>
</feature>
<feature type="compositionally biased region" description="Polar residues" evidence="2">
    <location>
        <begin position="355"/>
        <end position="392"/>
    </location>
</feature>
<feature type="compositionally biased region" description="Polar residues" evidence="2">
    <location>
        <begin position="407"/>
        <end position="425"/>
    </location>
</feature>
<feature type="compositionally biased region" description="Basic and acidic residues" evidence="2">
    <location>
        <begin position="426"/>
        <end position="444"/>
    </location>
</feature>
<feature type="compositionally biased region" description="Polar residues" evidence="2">
    <location>
        <begin position="446"/>
        <end position="457"/>
    </location>
</feature>
<name>CSA6_CANAL</name>
<evidence type="ECO:0000255" key="1"/>
<evidence type="ECO:0000256" key="2">
    <source>
        <dbReference type="SAM" id="MobiDB-lite"/>
    </source>
</evidence>
<evidence type="ECO:0000269" key="3">
    <source>
    </source>
</evidence>
<evidence type="ECO:0000303" key="4">
    <source>
    </source>
</evidence>
<evidence type="ECO:0000305" key="5"/>
<evidence type="ECO:0000312" key="6">
    <source>
        <dbReference type="CGD" id="CAL0000194943"/>
    </source>
</evidence>
<evidence type="ECO:0000312" key="7">
    <source>
        <dbReference type="EMBL" id="AOW27188.1"/>
    </source>
</evidence>
<evidence type="ECO:0000312" key="8">
    <source>
        <dbReference type="Proteomes" id="UP000000559"/>
    </source>
</evidence>
<organism evidence="8">
    <name type="scientific">Candida albicans (strain SC5314 / ATCC MYA-2876)</name>
    <name type="common">Yeast</name>
    <dbReference type="NCBI Taxonomy" id="237561"/>
    <lineage>
        <taxon>Eukaryota</taxon>
        <taxon>Fungi</taxon>
        <taxon>Dikarya</taxon>
        <taxon>Ascomycota</taxon>
        <taxon>Saccharomycotina</taxon>
        <taxon>Pichiomycetes</taxon>
        <taxon>Debaryomycetaceae</taxon>
        <taxon>Candida/Lodderomyces clade</taxon>
        <taxon>Candida</taxon>
    </lineage>
</organism>
<proteinExistence type="predicted"/>
<keyword id="KW-0175">Coiled coil</keyword>
<keyword id="KW-0963">Cytoplasm</keyword>
<keyword id="KW-0206">Cytoskeleton</keyword>
<keyword id="KW-1185">Reference proteome</keyword>
<protein>
    <recommendedName>
        <fullName evidence="5">Spindle pole body protein CSA6</fullName>
    </recommendedName>
    <alternativeName>
        <fullName evidence="4">Chromosomal stability protein 6</fullName>
        <shortName evidence="4">CaCSA6</shortName>
    </alternativeName>
</protein>
<gene>
    <name evidence="4" type="primary">CSA6</name>
    <name evidence="7" type="ordered locus">CAALFM_C201420CA</name>
    <name evidence="6" type="ordered locus">orf19.9022</name>
</gene>
<sequence>MEDSTEDIIKSFTLEQSPEIKPKPKSKTSDLTDIVYAMDDDSIKMKKFTIFDDKYDQNISDSEHDLTPIKRKRQSAQSAPPPPATKFSSSIPQKPTLSPKKLATSPTKNYTDHINQLRSGPNSPKKYQDDENIRSLKYEIKRLKQEQNLKLENLQHKIDYLTNERDELQNQLTSMSFENDKLTKKNRSLSHENNHLTLENSKLKTKEYSNEELQSENNKLQRVNSTLRNERDELVKDFNITRDKLKKYYDLYLHCQKAHAKEMKKRIEVDGDKPISDKPMADNSTNQELVDVLKKLSEMMIEQKKISEPSAAVEKDTTSEDKTPPIPNTANSSDTPRMVSDFLEDFIKRVFEEMSSNNKNTLSPKQAINSQTYSQPNNFSNNTVPPSQSAAYNPSNSQPAPPPQPATNFYSSSTPNTNGYNQSSQSDERPETFELPHVAKDHWLQRPTSERSTQSTKYMKMDPEDIRKLVSVITDQLKKEQKSEKPSNVVEMETPVEKCQCCHGNPRNVTDTNNNQKLCQSCLNKGDFTMSEFMGRSN</sequence>
<reference evidence="8" key="1">
    <citation type="journal article" date="2004" name="Proc. Natl. Acad. Sci. U.S.A.">
        <title>The diploid genome sequence of Candida albicans.</title>
        <authorList>
            <person name="Jones T."/>
            <person name="Federspiel N.A."/>
            <person name="Chibana H."/>
            <person name="Dungan J."/>
            <person name="Kalman S."/>
            <person name="Magee B.B."/>
            <person name="Newport G."/>
            <person name="Thorstenson Y.R."/>
            <person name="Agabian N."/>
            <person name="Magee P.T."/>
            <person name="Davis R.W."/>
            <person name="Scherer S."/>
        </authorList>
    </citation>
    <scope>NUCLEOTIDE SEQUENCE [LARGE SCALE GENOMIC DNA]</scope>
    <source>
        <strain evidence="8">SC5314 / ATCC MYA-2876</strain>
    </source>
</reference>
<reference evidence="8" key="2">
    <citation type="journal article" date="2007" name="Genome Biol.">
        <title>Assembly of the Candida albicans genome into sixteen supercontigs aligned on the eight chromosomes.</title>
        <authorList>
            <person name="van het Hoog M."/>
            <person name="Rast T.J."/>
            <person name="Martchenko M."/>
            <person name="Grindle S."/>
            <person name="Dignard D."/>
            <person name="Hogues H."/>
            <person name="Cuomo C."/>
            <person name="Berriman M."/>
            <person name="Scherer S."/>
            <person name="Magee B.B."/>
            <person name="Whiteway M."/>
            <person name="Chibana H."/>
            <person name="Nantel A."/>
            <person name="Magee P.T."/>
        </authorList>
    </citation>
    <scope>GENOME REANNOTATION</scope>
    <source>
        <strain evidence="8">SC5314 / ATCC MYA-2876</strain>
    </source>
</reference>
<reference evidence="8" key="3">
    <citation type="journal article" date="2013" name="Genome Biol.">
        <title>Assembly of a phased diploid Candida albicans genome facilitates allele-specific measurements and provides a simple model for repeat and indel structure.</title>
        <authorList>
            <person name="Muzzey D."/>
            <person name="Schwartz K."/>
            <person name="Weissman J.S."/>
            <person name="Sherlock G."/>
        </authorList>
    </citation>
    <scope>NUCLEOTIDE SEQUENCE [LARGE SCALE GENOMIC DNA]</scope>
    <scope>GENOME REANNOTATION</scope>
    <source>
        <strain>SC5314 / ATCC MYA-2876</strain>
    </source>
</reference>
<reference evidence="5" key="4">
    <citation type="journal article" date="2022" name="Nat. Commun.">
        <title>A phylogenetically-restricted essential cell cycle progression factor in the human pathogen Candida albicans.</title>
        <authorList>
            <person name="Jaitly P."/>
            <person name="Legrand M."/>
            <person name="Das A."/>
            <person name="Patel T."/>
            <person name="Chauvel M."/>
            <person name="Maufrais C."/>
            <person name="d'Enfert C."/>
            <person name="Sanyal K."/>
        </authorList>
    </citation>
    <scope>FUNCTION</scope>
    <scope>SUBCELLULAR LOCATION</scope>
    <scope>DISRUPTION PHENOTYPE</scope>
</reference>
<dbReference type="EMBL" id="CP017624">
    <property type="protein sequence ID" value="AOW27188.1"/>
    <property type="molecule type" value="Genomic_DNA"/>
</dbReference>
<dbReference type="RefSeq" id="XP_722497.2">
    <property type="nucleotide sequence ID" value="XM_717404.2"/>
</dbReference>
<dbReference type="SMR" id="A0A1D8PGB8"/>
<dbReference type="EnsemblFungi" id="C2_01420C_A-T">
    <property type="protein sequence ID" value="C2_01420C_A-T-p1"/>
    <property type="gene ID" value="C2_01420C_A"/>
</dbReference>
<dbReference type="GeneID" id="3635841"/>
<dbReference type="KEGG" id="cal:CAALFM_C201420CA"/>
<dbReference type="CGD" id="CAL0000194943">
    <property type="gene designation" value="orf19.9022"/>
</dbReference>
<dbReference type="VEuPathDB" id="FungiDB:C2_01420C_A"/>
<dbReference type="InParanoid" id="A0A1D8PGB8"/>
<dbReference type="OMA" id="LSHENNH"/>
<dbReference type="OrthoDB" id="10267903at2759"/>
<dbReference type="Proteomes" id="UP000000559">
    <property type="component" value="Chromosome 2"/>
</dbReference>
<dbReference type="GO" id="GO:0005737">
    <property type="term" value="C:cytoplasm"/>
    <property type="evidence" value="ECO:0007669"/>
    <property type="project" value="UniProtKB-KW"/>
</dbReference>
<dbReference type="GO" id="GO:0044732">
    <property type="term" value="C:mitotic spindle pole body"/>
    <property type="evidence" value="ECO:0000314"/>
    <property type="project" value="UniProtKB"/>
</dbReference>
<dbReference type="GO" id="GO:1905047">
    <property type="term" value="P:mitotic spindle pole body organization"/>
    <property type="evidence" value="ECO:0000315"/>
    <property type="project" value="UniProtKB"/>
</dbReference>
<comment type="function">
    <text evidence="3">Plays a role in mitotic spindle pole body organization, possibly at the point of spindle pole body separation (PubMed:35869076). Required for mitotic exit (PubMed:35869076).</text>
</comment>
<comment type="subcellular location">
    <subcellularLocation>
        <location evidence="3">Cytoplasm</location>
        <location evidence="3">Cytoskeleton</location>
        <location evidence="3">Microtubule organizing center</location>
        <location evidence="3">Spindle pole body</location>
    </subcellularLocation>
    <text evidence="3">Also localizes to the bud neck and buds.</text>
</comment>
<comment type="disruption phenotype">
    <text evidence="3">Leads to an elongated mitotic spindle (PubMed:35869076). Restricts localization of TEM1 to one spindle pole body in a large proportion of cells (PubMed:35869076). Increases the level of CSE4 protein in the cell (PubMed:35869076). Cell cycle arrest at the late anaphase/telophase stage with segregated nuclei and 4N DNA content (PubMed:35869076). Simultaneous disruption of BUB2 partially suppresses the cell cycle arrest phenotype (PubMed:35869076).</text>
</comment>
<accession>A0A1D8PGB8</accession>